<name>GP54_BPSP1</name>
<protein>
    <recommendedName>
        <fullName>Putative gene 54 protein</fullName>
    </recommendedName>
</protein>
<organism>
    <name type="scientific">Bacillus phage SP01</name>
    <name type="common">Bacteriophage SP01</name>
    <dbReference type="NCBI Taxonomy" id="2884427"/>
    <lineage>
        <taxon>Viruses</taxon>
        <taxon>Duplodnaviria</taxon>
        <taxon>Heunggongvirae</taxon>
        <taxon>Uroviricota</taxon>
        <taxon>Caudoviricetes</taxon>
        <taxon>Herelleviridae</taxon>
        <taxon>Spounavirinae</taxon>
        <taxon>Okubovirus</taxon>
        <taxon>Okubovirus SPO1</taxon>
    </lineage>
</organism>
<gene>
    <name type="primary">54</name>
</gene>
<organismHost>
    <name type="scientific">Bacillus subtilis</name>
    <dbReference type="NCBI Taxonomy" id="1423"/>
</organismHost>
<dbReference type="EMBL" id="AF031901">
    <property type="protein sequence ID" value="AAC29023.1"/>
    <property type="molecule type" value="Genomic_DNA"/>
</dbReference>
<dbReference type="RefSeq" id="YP_002300300.1">
    <property type="nucleotide sequence ID" value="NC_011421.1"/>
</dbReference>
<dbReference type="SMR" id="O48408"/>
<dbReference type="GeneID" id="7009013"/>
<dbReference type="KEGG" id="vg:7009013"/>
<accession>O48408</accession>
<feature type="chain" id="PRO_0000106160" description="Putative gene 54 protein">
    <location>
        <begin position="1"/>
        <end position="46"/>
    </location>
</feature>
<reference key="1">
    <citation type="journal article" date="1998" name="Virology">
        <title>Genes and regulatory sites of the 'host-takeover module' in the terminal redundancy of Bacillus subtilis bacteriophage SPO1.</title>
        <authorList>
            <person name="Stewart C.R."/>
            <person name="Gaslightwala I."/>
            <person name="Hinata K."/>
            <person name="Krolikowski K.A."/>
            <person name="Needleman D.S."/>
            <person name="Peng A.S.-Y."/>
            <person name="Peterman M.A."/>
            <person name="Tobias A."/>
            <person name="Wei P."/>
        </authorList>
    </citation>
    <scope>NUCLEOTIDE SEQUENCE [GENOMIC DNA]</scope>
</reference>
<sequence>MVIIKYTTKTQPTPVKEMFISPQHYAKWRSHMGSKLTSVKPIKGGR</sequence>
<proteinExistence type="predicted"/>